<evidence type="ECO:0000255" key="1">
    <source>
        <dbReference type="HAMAP-Rule" id="MF_00201"/>
    </source>
</evidence>
<reference key="1">
    <citation type="journal article" date="2007" name="Photosyn. Res.">
        <title>Complete nucleotide sequence of the freshwater unicellular cyanobacterium Synechococcus elongatus PCC 6301 chromosome: gene content and organization.</title>
        <authorList>
            <person name="Sugita C."/>
            <person name="Ogata K."/>
            <person name="Shikata M."/>
            <person name="Jikuya H."/>
            <person name="Takano J."/>
            <person name="Furumichi M."/>
            <person name="Kanehisa M."/>
            <person name="Omata T."/>
            <person name="Sugiura M."/>
            <person name="Sugita M."/>
        </authorList>
    </citation>
    <scope>NUCLEOTIDE SEQUENCE [LARGE SCALE GENOMIC DNA]</scope>
    <source>
        <strain>ATCC 27144 / PCC 6301 / SAUG 1402/1</strain>
    </source>
</reference>
<name>RECO_SYNP6</name>
<sequence>MSRTYTTTAIVLKATPLGEADRLLTLLSPDQGLLRVVATGARKPRSKLGGRTALFVVGDCLIACGKSLDRLQQVETLTSHTALSGDLARLAAAQYLTELVLAQALERHPQPELFALLCRDLARIETQSGLEVLPYLLQSTWQLLAWAGWAPQTHYCCLTQQAVQPRLEQSRWRVRYSPSLGGVLADTAAYQRRPNQRELLLTATELAALQQIPTSQTVLPLASLPREAWQMLERALRHSAEYHLERPLQSALLLETLLTGSHVASV</sequence>
<comment type="function">
    <text evidence="1">Involved in DNA repair and RecF pathway recombination.</text>
</comment>
<comment type="similarity">
    <text evidence="1">Belongs to the RecO family.</text>
</comment>
<feature type="chain" id="PRO_0000205018" description="DNA repair protein RecO">
    <location>
        <begin position="1"/>
        <end position="266"/>
    </location>
</feature>
<organism>
    <name type="scientific">Synechococcus sp. (strain ATCC 27144 / PCC 6301 / SAUG 1402/1)</name>
    <name type="common">Anacystis nidulans</name>
    <dbReference type="NCBI Taxonomy" id="269084"/>
    <lineage>
        <taxon>Bacteria</taxon>
        <taxon>Bacillati</taxon>
        <taxon>Cyanobacteriota</taxon>
        <taxon>Cyanophyceae</taxon>
        <taxon>Synechococcales</taxon>
        <taxon>Synechococcaceae</taxon>
        <taxon>Synechococcus</taxon>
    </lineage>
</organism>
<proteinExistence type="inferred from homology"/>
<protein>
    <recommendedName>
        <fullName evidence="1">DNA repair protein RecO</fullName>
    </recommendedName>
    <alternativeName>
        <fullName evidence="1">Recombination protein O</fullName>
    </alternativeName>
</protein>
<accession>Q5N4L9</accession>
<dbReference type="EMBL" id="AP008231">
    <property type="protein sequence ID" value="BAD78750.1"/>
    <property type="molecule type" value="Genomic_DNA"/>
</dbReference>
<dbReference type="RefSeq" id="WP_011242872.1">
    <property type="nucleotide sequence ID" value="NZ_CP085785.1"/>
</dbReference>
<dbReference type="SMR" id="Q5N4L9"/>
<dbReference type="GeneID" id="72429837"/>
<dbReference type="KEGG" id="syc:syc0560_c"/>
<dbReference type="eggNOG" id="COG1381">
    <property type="taxonomic scope" value="Bacteria"/>
</dbReference>
<dbReference type="Proteomes" id="UP000001175">
    <property type="component" value="Chromosome"/>
</dbReference>
<dbReference type="GO" id="GO:0043590">
    <property type="term" value="C:bacterial nucleoid"/>
    <property type="evidence" value="ECO:0007669"/>
    <property type="project" value="TreeGrafter"/>
</dbReference>
<dbReference type="GO" id="GO:0006310">
    <property type="term" value="P:DNA recombination"/>
    <property type="evidence" value="ECO:0007669"/>
    <property type="project" value="UniProtKB-UniRule"/>
</dbReference>
<dbReference type="GO" id="GO:0006302">
    <property type="term" value="P:double-strand break repair"/>
    <property type="evidence" value="ECO:0007669"/>
    <property type="project" value="TreeGrafter"/>
</dbReference>
<dbReference type="Gene3D" id="2.40.50.140">
    <property type="entry name" value="Nucleic acid-binding proteins"/>
    <property type="match status" value="1"/>
</dbReference>
<dbReference type="Gene3D" id="1.20.1440.120">
    <property type="entry name" value="Recombination protein O, C-terminal domain"/>
    <property type="match status" value="1"/>
</dbReference>
<dbReference type="HAMAP" id="MF_00201">
    <property type="entry name" value="RecO"/>
    <property type="match status" value="1"/>
</dbReference>
<dbReference type="InterPro" id="IPR037278">
    <property type="entry name" value="ARFGAP/RecO"/>
</dbReference>
<dbReference type="InterPro" id="IPR022572">
    <property type="entry name" value="DNA_rep/recomb_RecO_N"/>
</dbReference>
<dbReference type="InterPro" id="IPR012340">
    <property type="entry name" value="NA-bd_OB-fold"/>
</dbReference>
<dbReference type="InterPro" id="IPR003717">
    <property type="entry name" value="RecO"/>
</dbReference>
<dbReference type="InterPro" id="IPR042242">
    <property type="entry name" value="RecO_C"/>
</dbReference>
<dbReference type="NCBIfam" id="TIGR00613">
    <property type="entry name" value="reco"/>
    <property type="match status" value="1"/>
</dbReference>
<dbReference type="PANTHER" id="PTHR33991">
    <property type="entry name" value="DNA REPAIR PROTEIN RECO"/>
    <property type="match status" value="1"/>
</dbReference>
<dbReference type="PANTHER" id="PTHR33991:SF1">
    <property type="entry name" value="DNA REPAIR PROTEIN RECO"/>
    <property type="match status" value="1"/>
</dbReference>
<dbReference type="Pfam" id="PF02565">
    <property type="entry name" value="RecO_C"/>
    <property type="match status" value="1"/>
</dbReference>
<dbReference type="Pfam" id="PF11967">
    <property type="entry name" value="RecO_N"/>
    <property type="match status" value="1"/>
</dbReference>
<dbReference type="SUPFAM" id="SSF57863">
    <property type="entry name" value="ArfGap/RecO-like zinc finger"/>
    <property type="match status" value="1"/>
</dbReference>
<dbReference type="SUPFAM" id="SSF50249">
    <property type="entry name" value="Nucleic acid-binding proteins"/>
    <property type="match status" value="1"/>
</dbReference>
<keyword id="KW-0227">DNA damage</keyword>
<keyword id="KW-0233">DNA recombination</keyword>
<keyword id="KW-0234">DNA repair</keyword>
<gene>
    <name evidence="1" type="primary">recO</name>
    <name type="ordered locus">syc0560_c</name>
</gene>